<dbReference type="EMBL" id="AP007281">
    <property type="protein sequence ID" value="BAG25174.1"/>
    <property type="molecule type" value="Genomic_DNA"/>
</dbReference>
<dbReference type="RefSeq" id="WP_003666861.1">
    <property type="nucleotide sequence ID" value="NC_010609.1"/>
</dbReference>
<dbReference type="SMR" id="B2G6U2"/>
<dbReference type="KEGG" id="lrf:LAR_0658"/>
<dbReference type="HOGENOM" id="CLU_047155_0_2_9"/>
<dbReference type="GO" id="GO:0005737">
    <property type="term" value="C:cytoplasm"/>
    <property type="evidence" value="ECO:0007669"/>
    <property type="project" value="UniProtKB-SubCell"/>
</dbReference>
<dbReference type="GO" id="GO:0003746">
    <property type="term" value="F:translation elongation factor activity"/>
    <property type="evidence" value="ECO:0007669"/>
    <property type="project" value="UniProtKB-UniRule"/>
</dbReference>
<dbReference type="CDD" id="cd14275">
    <property type="entry name" value="UBA_EF-Ts"/>
    <property type="match status" value="1"/>
</dbReference>
<dbReference type="FunFam" id="1.10.286.20:FF:000001">
    <property type="entry name" value="Elongation factor Ts"/>
    <property type="match status" value="1"/>
</dbReference>
<dbReference type="FunFam" id="1.10.8.10:FF:000001">
    <property type="entry name" value="Elongation factor Ts"/>
    <property type="match status" value="1"/>
</dbReference>
<dbReference type="Gene3D" id="1.10.286.20">
    <property type="match status" value="1"/>
</dbReference>
<dbReference type="Gene3D" id="1.10.8.10">
    <property type="entry name" value="DNA helicase RuvA subunit, C-terminal domain"/>
    <property type="match status" value="1"/>
</dbReference>
<dbReference type="Gene3D" id="3.30.479.20">
    <property type="entry name" value="Elongation factor Ts, dimerisation domain"/>
    <property type="match status" value="2"/>
</dbReference>
<dbReference type="HAMAP" id="MF_00050">
    <property type="entry name" value="EF_Ts"/>
    <property type="match status" value="1"/>
</dbReference>
<dbReference type="InterPro" id="IPR036402">
    <property type="entry name" value="EF-Ts_dimer_sf"/>
</dbReference>
<dbReference type="InterPro" id="IPR001816">
    <property type="entry name" value="Transl_elong_EFTs/EF1B"/>
</dbReference>
<dbReference type="InterPro" id="IPR014039">
    <property type="entry name" value="Transl_elong_EFTs/EF1B_dimer"/>
</dbReference>
<dbReference type="InterPro" id="IPR018101">
    <property type="entry name" value="Transl_elong_Ts_CS"/>
</dbReference>
<dbReference type="InterPro" id="IPR009060">
    <property type="entry name" value="UBA-like_sf"/>
</dbReference>
<dbReference type="NCBIfam" id="TIGR00116">
    <property type="entry name" value="tsf"/>
    <property type="match status" value="1"/>
</dbReference>
<dbReference type="PANTHER" id="PTHR11741">
    <property type="entry name" value="ELONGATION FACTOR TS"/>
    <property type="match status" value="1"/>
</dbReference>
<dbReference type="PANTHER" id="PTHR11741:SF0">
    <property type="entry name" value="ELONGATION FACTOR TS, MITOCHONDRIAL"/>
    <property type="match status" value="1"/>
</dbReference>
<dbReference type="Pfam" id="PF00889">
    <property type="entry name" value="EF_TS"/>
    <property type="match status" value="1"/>
</dbReference>
<dbReference type="SUPFAM" id="SSF54713">
    <property type="entry name" value="Elongation factor Ts (EF-Ts), dimerisation domain"/>
    <property type="match status" value="2"/>
</dbReference>
<dbReference type="SUPFAM" id="SSF46934">
    <property type="entry name" value="UBA-like"/>
    <property type="match status" value="1"/>
</dbReference>
<dbReference type="PROSITE" id="PS01126">
    <property type="entry name" value="EF_TS_1"/>
    <property type="match status" value="1"/>
</dbReference>
<dbReference type="PROSITE" id="PS01127">
    <property type="entry name" value="EF_TS_2"/>
    <property type="match status" value="1"/>
</dbReference>
<protein>
    <recommendedName>
        <fullName evidence="1">Elongation factor Ts</fullName>
        <shortName evidence="1">EF-Ts</shortName>
    </recommendedName>
</protein>
<evidence type="ECO:0000255" key="1">
    <source>
        <dbReference type="HAMAP-Rule" id="MF_00050"/>
    </source>
</evidence>
<keyword id="KW-0963">Cytoplasm</keyword>
<keyword id="KW-0251">Elongation factor</keyword>
<keyword id="KW-0648">Protein biosynthesis</keyword>
<name>EFTS_LIMRJ</name>
<reference key="1">
    <citation type="journal article" date="2008" name="DNA Res.">
        <title>Comparative genome analysis of Lactobacillus reuteri and Lactobacillus fermentum reveal a genomic island for reuterin and cobalamin production.</title>
        <authorList>
            <person name="Morita H."/>
            <person name="Toh H."/>
            <person name="Fukuda S."/>
            <person name="Horikawa H."/>
            <person name="Oshima K."/>
            <person name="Suzuki T."/>
            <person name="Murakami M."/>
            <person name="Hisamatsu S."/>
            <person name="Kato Y."/>
            <person name="Takizawa T."/>
            <person name="Fukuoka H."/>
            <person name="Yoshimura T."/>
            <person name="Itoh K."/>
            <person name="O'Sullivan D.J."/>
            <person name="McKay L.L."/>
            <person name="Ohno H."/>
            <person name="Kikuchi J."/>
            <person name="Masaoka T."/>
            <person name="Hattori M."/>
        </authorList>
    </citation>
    <scope>NUCLEOTIDE SEQUENCE [LARGE SCALE GENOMIC DNA]</scope>
    <source>
        <strain>JCM 1112</strain>
    </source>
</reference>
<sequence>MAEIKAAQVMQLRKKSGAGIMDAKKALVASDGDMDKAMDYLREKGIAKAAKKSDRVAAEGLADIAVNGNTAAIVELNSETDFVAASEPFKDLLKKVTKLISENKPANVEEALEIKTENGTLNDDIISTTQKTGEKVSLRRFTVVEKDDGDSFGAYLHQGGQIAALVVLEGADDATAKDVAMHVAAINPEFMTRDDVSQERLDHERAIFKEETLNEGKPEKIVDKIVEGRLNKFLSQICLADQDFVKDSDQTVEQYVSSKNGKLKSFIRYEVGEGIEKKQDDFAQEVKDQMN</sequence>
<feature type="chain" id="PRO_1000116752" description="Elongation factor Ts">
    <location>
        <begin position="1"/>
        <end position="291"/>
    </location>
</feature>
<feature type="region of interest" description="Involved in Mg(2+) ion dislocation from EF-Tu" evidence="1">
    <location>
        <begin position="80"/>
        <end position="83"/>
    </location>
</feature>
<comment type="function">
    <text evidence="1">Associates with the EF-Tu.GDP complex and induces the exchange of GDP to GTP. It remains bound to the aminoacyl-tRNA.EF-Tu.GTP complex up to the GTP hydrolysis stage on the ribosome.</text>
</comment>
<comment type="subcellular location">
    <subcellularLocation>
        <location evidence="1">Cytoplasm</location>
    </subcellularLocation>
</comment>
<comment type="similarity">
    <text evidence="1">Belongs to the EF-Ts family.</text>
</comment>
<gene>
    <name evidence="1" type="primary">tsf</name>
    <name type="ordered locus">LAR_0658</name>
</gene>
<proteinExistence type="inferred from homology"/>
<organism>
    <name type="scientific">Limosilactobacillus reuteri subsp. reuteri (strain JCM 1112)</name>
    <name type="common">Lactobacillus reuteri</name>
    <dbReference type="NCBI Taxonomy" id="557433"/>
    <lineage>
        <taxon>Bacteria</taxon>
        <taxon>Bacillati</taxon>
        <taxon>Bacillota</taxon>
        <taxon>Bacilli</taxon>
        <taxon>Lactobacillales</taxon>
        <taxon>Lactobacillaceae</taxon>
        <taxon>Limosilactobacillus</taxon>
    </lineage>
</organism>
<accession>B2G6U2</accession>